<organism>
    <name type="scientific">Illawarra wisharti</name>
    <name type="common">Illawarra funnel-web spider</name>
    <dbReference type="NCBI Taxonomy" id="278061"/>
    <lineage>
        <taxon>Eukaryota</taxon>
        <taxon>Metazoa</taxon>
        <taxon>Ecdysozoa</taxon>
        <taxon>Arthropoda</taxon>
        <taxon>Chelicerata</taxon>
        <taxon>Arachnida</taxon>
        <taxon>Araneae</taxon>
        <taxon>Mygalomorphae</taxon>
        <taxon>Hexathelidae</taxon>
        <taxon>Hadronyche</taxon>
    </lineage>
</organism>
<dbReference type="EMBL" id="AY914167">
    <property type="protein sequence ID" value="AAX11347.1"/>
    <property type="molecule type" value="mRNA"/>
</dbReference>
<dbReference type="SMR" id="Q5D229"/>
<dbReference type="ArachnoServer" id="AS000544">
    <property type="toxin name" value="U1-hexatoxin-Iw1d"/>
</dbReference>
<dbReference type="GO" id="GO:0005576">
    <property type="term" value="C:extracellular region"/>
    <property type="evidence" value="ECO:0007669"/>
    <property type="project" value="UniProtKB-SubCell"/>
</dbReference>
<dbReference type="Gene3D" id="2.10.80.10">
    <property type="entry name" value="Lipase, subunit A"/>
    <property type="match status" value="1"/>
</dbReference>
<dbReference type="InterPro" id="IPR020202">
    <property type="entry name" value="Atracotoxin"/>
</dbReference>
<dbReference type="Pfam" id="PF17556">
    <property type="entry name" value="MIT_LIKE_ACTX"/>
    <property type="match status" value="1"/>
</dbReference>
<keyword id="KW-1015">Disulfide bond</keyword>
<keyword id="KW-0873">Pyrrolidone carboxylic acid</keyword>
<keyword id="KW-0964">Secreted</keyword>
<keyword id="KW-0732">Signal</keyword>
<evidence type="ECO:0000269" key="1">
    <source>
    </source>
</evidence>
<evidence type="ECO:0000303" key="2">
    <source>
    </source>
</evidence>
<evidence type="ECO:0000305" key="3"/>
<evidence type="ECO:0000305" key="4">
    <source>
    </source>
</evidence>
<name>T7418_ILLWI</name>
<accession>Q5D229</accession>
<reference key="1">
    <citation type="journal article" date="2005" name="Peptides">
        <title>Discovery of an MIT-like atracotoxin family: spider venom peptides that share sequence homology but not pharmacological properties with AVIT family proteins.</title>
        <authorList>
            <person name="Wen S."/>
            <person name="Wilson D.T."/>
            <person name="Kuruppu S."/>
            <person name="Korsinczky M.L."/>
            <person name="Hedrick J."/>
            <person name="Pang L."/>
            <person name="Szeto T."/>
            <person name="Hodgson W.C."/>
            <person name="Alewood P.F."/>
            <person name="Nicholson G.M."/>
        </authorList>
    </citation>
    <scope>NUCLEOTIDE SEQUENCE [MRNA]</scope>
    <scope>PYROGLUTAMATE FORMATION AT GLN-18</scope>
    <scope>SUBCELLULAR LOCATION</scope>
    <source>
        <tissue>Venom</tissue>
        <tissue>Venom gland</tissue>
    </source>
</reference>
<sequence>LKFVVLICLVIMASTSAQQCGDETCGAGTCCAVFSQNHCRRLSRMYDLCSDHADASPSGNYLFFCPCEPGLHCDRNTWTCTEGSSRSE</sequence>
<comment type="subcellular location">
    <subcellularLocation>
        <location evidence="1">Secreted</location>
    </subcellularLocation>
</comment>
<comment type="tissue specificity">
    <text evidence="4">Expressed by the venom gland.</text>
</comment>
<comment type="similarity">
    <text evidence="3">Belongs to the MIT-like AcTx family.</text>
</comment>
<proteinExistence type="evidence at protein level"/>
<protein>
    <recommendedName>
        <fullName>U1-hexatoxin-Iw1d</fullName>
        <shortName>U1-HXTX-Iw1d</shortName>
    </recommendedName>
    <alternativeName>
        <fullName evidence="2">Atracotoxin-Hs20f7418</fullName>
        <shortName evidence="2">AcTx-Hs20f7418</shortName>
    </alternativeName>
</protein>
<feature type="signal peptide">
    <location>
        <begin position="1" status="less than"/>
        <end position="17"/>
    </location>
</feature>
<feature type="chain" id="PRO_0000265764" description="U1-hexatoxin-Iw1d">
    <location>
        <begin position="18"/>
        <end position="85"/>
    </location>
</feature>
<feature type="propeptide" id="PRO_0000265765">
    <location>
        <begin position="86"/>
        <end position="88"/>
    </location>
</feature>
<feature type="modified residue" description="Pyrrolidone carboxylic acid" evidence="1">
    <location>
        <position position="18"/>
    </location>
</feature>
<feature type="disulfide bond" evidence="4">
    <location>
        <begin position="20"/>
        <end position="31"/>
    </location>
</feature>
<feature type="disulfide bond" evidence="4">
    <location>
        <begin position="25"/>
        <end position="39"/>
    </location>
</feature>
<feature type="disulfide bond" evidence="4">
    <location>
        <begin position="30"/>
        <end position="65"/>
    </location>
</feature>
<feature type="disulfide bond" evidence="4">
    <location>
        <begin position="49"/>
        <end position="73"/>
    </location>
</feature>
<feature type="disulfide bond" evidence="4">
    <location>
        <begin position="67"/>
        <end position="80"/>
    </location>
</feature>
<feature type="non-terminal residue">
    <location>
        <position position="1"/>
    </location>
</feature>